<keyword id="KW-0328">Glycosyltransferase</keyword>
<keyword id="KW-0448">Lipopolysaccharide biosynthesis</keyword>
<keyword id="KW-1185">Reference proteome</keyword>
<keyword id="KW-0808">Transferase</keyword>
<evidence type="ECO:0000305" key="1"/>
<feature type="chain" id="PRO_0000216237" description="Lacto-N-neotetraose biosynthesis glycosyltransferase LgtB">
    <location>
        <begin position="1"/>
        <end position="275"/>
    </location>
</feature>
<feature type="sequence conflict" description="In Ref. 1; AAC44085." evidence="1" ref="1">
    <original>A</original>
    <variation>E</variation>
    <location>
        <position position="97"/>
    </location>
</feature>
<comment type="function">
    <text>Adds the second galactose to the lacto-N-tetraose chain in lipooligosaccharide (LOS).</text>
</comment>
<comment type="pathway">
    <text>Glycan metabolism; lacto-N-neotetraose biosynthesis.</text>
</comment>
<comment type="pathway">
    <text>Bacterial outer membrane biogenesis; lipooligosaccharide biosynthesis.</text>
</comment>
<comment type="similarity">
    <text evidence="1">Belongs to the glycosyltransferase 25 family.</text>
</comment>
<name>LGTB_NEIMB</name>
<organism>
    <name type="scientific">Neisseria meningitidis serogroup B (strain ATCC BAA-335 / MC58)</name>
    <dbReference type="NCBI Taxonomy" id="122586"/>
    <lineage>
        <taxon>Bacteria</taxon>
        <taxon>Pseudomonadati</taxon>
        <taxon>Pseudomonadota</taxon>
        <taxon>Betaproteobacteria</taxon>
        <taxon>Neisseriales</taxon>
        <taxon>Neisseriaceae</taxon>
        <taxon>Neisseria</taxon>
    </lineage>
</organism>
<protein>
    <recommendedName>
        <fullName>Lacto-N-neotetraose biosynthesis glycosyltransferase LgtB</fullName>
        <ecNumber>2.-.-.-</ecNumber>
    </recommendedName>
</protein>
<dbReference type="EC" id="2.-.-.-"/>
<dbReference type="EMBL" id="U25839">
    <property type="protein sequence ID" value="AAC44085.1"/>
    <property type="molecule type" value="Genomic_DNA"/>
</dbReference>
<dbReference type="EMBL" id="AE002098">
    <property type="protein sequence ID" value="AAF42257.1"/>
    <property type="molecule type" value="Genomic_DNA"/>
</dbReference>
<dbReference type="PIR" id="C81027">
    <property type="entry name" value="C81027"/>
</dbReference>
<dbReference type="PIR" id="S70814">
    <property type="entry name" value="S70814"/>
</dbReference>
<dbReference type="RefSeq" id="NP_274922.1">
    <property type="nucleotide sequence ID" value="NC_003112.2"/>
</dbReference>
<dbReference type="RefSeq" id="WP_002225824.1">
    <property type="nucleotide sequence ID" value="NC_003112.2"/>
</dbReference>
<dbReference type="SMR" id="Q51116"/>
<dbReference type="STRING" id="122586.NMB1928"/>
<dbReference type="CAZy" id="GT25">
    <property type="family name" value="Glycosyltransferase Family 25"/>
</dbReference>
<dbReference type="PaxDb" id="122586-NMB1928"/>
<dbReference type="KEGG" id="nme:NMB1928"/>
<dbReference type="PATRIC" id="fig|122586.8.peg.2456"/>
<dbReference type="HOGENOM" id="CLU_071269_2_1_4"/>
<dbReference type="InParanoid" id="Q51116"/>
<dbReference type="OrthoDB" id="119742at2"/>
<dbReference type="BRENDA" id="2.4.1.38">
    <property type="organism ID" value="16309"/>
</dbReference>
<dbReference type="UniPathway" id="UPA00501"/>
<dbReference type="UniPathway" id="UPA00820"/>
<dbReference type="Proteomes" id="UP000000425">
    <property type="component" value="Chromosome"/>
</dbReference>
<dbReference type="GO" id="GO:0016757">
    <property type="term" value="F:glycosyltransferase activity"/>
    <property type="evidence" value="ECO:0007669"/>
    <property type="project" value="UniProtKB-KW"/>
</dbReference>
<dbReference type="GO" id="GO:0009103">
    <property type="term" value="P:lipopolysaccharide biosynthetic process"/>
    <property type="evidence" value="ECO:0007669"/>
    <property type="project" value="UniProtKB-KW"/>
</dbReference>
<dbReference type="CDD" id="cd06532">
    <property type="entry name" value="Glyco_transf_25"/>
    <property type="match status" value="1"/>
</dbReference>
<dbReference type="InterPro" id="IPR002654">
    <property type="entry name" value="Glyco_trans_25"/>
</dbReference>
<dbReference type="Pfam" id="PF01755">
    <property type="entry name" value="Glyco_transf_25"/>
    <property type="match status" value="1"/>
</dbReference>
<accession>Q51116</accession>
<gene>
    <name type="primary">lgtB</name>
    <name type="ordered locus">NMB1928</name>
</gene>
<proteinExistence type="inferred from homology"/>
<sequence length="275" mass="31578">MQNHVISLASAAERRAHIADTFGRHGIPFQFFDALMPSERLEQAMAELVPGLSAHPYLSGVEKACFMSHAVLWKQALDEGLPYITVFEDDVLLGEGAEKFLAEDAWLQERFDPDTAFIVRLETMFMHVLTSPSGVADYCGRAFPLLESEHWGTAGYIISRKAMRFFLDRFAALPPEGLHPVDLMMFSDFFDREGMPVCQLNPALCAQELHYAKFHDQNSALGSLIEHDRLLNRKQQRRDSPANTFKHRLIRALTKISREREKRRQRREQFIVPFQ</sequence>
<reference key="1">
    <citation type="journal article" date="1995" name="Mol. Microbiol.">
        <title>Molecular analysis of a locus for the biosynthesis and phase-variable expression of the lacto-N-neotetraose terminal lipopolysaccharide structure in Neisseria meningitidis.</title>
        <authorList>
            <person name="Jennings M.P."/>
            <person name="Hood D."/>
            <person name="Peak I.R.A."/>
            <person name="Virji M."/>
            <person name="Moxon E.R."/>
        </authorList>
    </citation>
    <scope>NUCLEOTIDE SEQUENCE [GENOMIC DNA]</scope>
    <source>
        <strain>ATCC BAA-335 / MC58</strain>
    </source>
</reference>
<reference key="2">
    <citation type="journal article" date="2000" name="Science">
        <title>Complete genome sequence of Neisseria meningitidis serogroup B strain MC58.</title>
        <authorList>
            <person name="Tettelin H."/>
            <person name="Saunders N.J."/>
            <person name="Heidelberg J.F."/>
            <person name="Jeffries A.C."/>
            <person name="Nelson K.E."/>
            <person name="Eisen J.A."/>
            <person name="Ketchum K.A."/>
            <person name="Hood D.W."/>
            <person name="Peden J.F."/>
            <person name="Dodson R.J."/>
            <person name="Nelson W.C."/>
            <person name="Gwinn M.L."/>
            <person name="DeBoy R.T."/>
            <person name="Peterson J.D."/>
            <person name="Hickey E.K."/>
            <person name="Haft D.H."/>
            <person name="Salzberg S.L."/>
            <person name="White O."/>
            <person name="Fleischmann R.D."/>
            <person name="Dougherty B.A."/>
            <person name="Mason T.M."/>
            <person name="Ciecko A."/>
            <person name="Parksey D.S."/>
            <person name="Blair E."/>
            <person name="Cittone H."/>
            <person name="Clark E.B."/>
            <person name="Cotton M.D."/>
            <person name="Utterback T.R."/>
            <person name="Khouri H.M."/>
            <person name="Qin H."/>
            <person name="Vamathevan J.J."/>
            <person name="Gill J."/>
            <person name="Scarlato V."/>
            <person name="Masignani V."/>
            <person name="Pizza M."/>
            <person name="Grandi G."/>
            <person name="Sun L."/>
            <person name="Smith H.O."/>
            <person name="Fraser C.M."/>
            <person name="Moxon E.R."/>
            <person name="Rappuoli R."/>
            <person name="Venter J.C."/>
        </authorList>
    </citation>
    <scope>NUCLEOTIDE SEQUENCE [LARGE SCALE GENOMIC DNA]</scope>
    <source>
        <strain>ATCC BAA-335 / MC58</strain>
    </source>
</reference>